<evidence type="ECO:0000255" key="1">
    <source>
        <dbReference type="HAMAP-Rule" id="MF_00060"/>
    </source>
</evidence>
<keyword id="KW-0963">Cytoplasm</keyword>
<keyword id="KW-0378">Hydrolase</keyword>
<keyword id="KW-0479">Metal-binding</keyword>
<keyword id="KW-0547">Nucleotide-binding</keyword>
<gene>
    <name evidence="1" type="primary">surE</name>
    <name type="ordered locus">RPE_2703</name>
</gene>
<dbReference type="EC" id="3.1.3.5" evidence="1"/>
<dbReference type="EMBL" id="CP000463">
    <property type="protein sequence ID" value="ABJ06640.1"/>
    <property type="molecule type" value="Genomic_DNA"/>
</dbReference>
<dbReference type="SMR" id="Q07N44"/>
<dbReference type="STRING" id="316055.RPE_2703"/>
<dbReference type="KEGG" id="rpe:RPE_2703"/>
<dbReference type="eggNOG" id="COG0496">
    <property type="taxonomic scope" value="Bacteria"/>
</dbReference>
<dbReference type="HOGENOM" id="CLU_045192_1_2_5"/>
<dbReference type="OrthoDB" id="9780815at2"/>
<dbReference type="GO" id="GO:0005737">
    <property type="term" value="C:cytoplasm"/>
    <property type="evidence" value="ECO:0007669"/>
    <property type="project" value="UniProtKB-SubCell"/>
</dbReference>
<dbReference type="GO" id="GO:0008254">
    <property type="term" value="F:3'-nucleotidase activity"/>
    <property type="evidence" value="ECO:0007669"/>
    <property type="project" value="TreeGrafter"/>
</dbReference>
<dbReference type="GO" id="GO:0008253">
    <property type="term" value="F:5'-nucleotidase activity"/>
    <property type="evidence" value="ECO:0007669"/>
    <property type="project" value="UniProtKB-UniRule"/>
</dbReference>
<dbReference type="GO" id="GO:0004309">
    <property type="term" value="F:exopolyphosphatase activity"/>
    <property type="evidence" value="ECO:0007669"/>
    <property type="project" value="TreeGrafter"/>
</dbReference>
<dbReference type="GO" id="GO:0046872">
    <property type="term" value="F:metal ion binding"/>
    <property type="evidence" value="ECO:0007669"/>
    <property type="project" value="UniProtKB-UniRule"/>
</dbReference>
<dbReference type="GO" id="GO:0000166">
    <property type="term" value="F:nucleotide binding"/>
    <property type="evidence" value="ECO:0007669"/>
    <property type="project" value="UniProtKB-KW"/>
</dbReference>
<dbReference type="FunFam" id="3.40.1210.10:FF:000001">
    <property type="entry name" value="5'/3'-nucleotidase SurE"/>
    <property type="match status" value="1"/>
</dbReference>
<dbReference type="Gene3D" id="3.40.1210.10">
    <property type="entry name" value="Survival protein SurE-like phosphatase/nucleotidase"/>
    <property type="match status" value="1"/>
</dbReference>
<dbReference type="HAMAP" id="MF_00060">
    <property type="entry name" value="SurE"/>
    <property type="match status" value="1"/>
</dbReference>
<dbReference type="InterPro" id="IPR030048">
    <property type="entry name" value="SurE"/>
</dbReference>
<dbReference type="InterPro" id="IPR002828">
    <property type="entry name" value="SurE-like_Pase/nucleotidase"/>
</dbReference>
<dbReference type="InterPro" id="IPR036523">
    <property type="entry name" value="SurE-like_sf"/>
</dbReference>
<dbReference type="NCBIfam" id="NF001490">
    <property type="entry name" value="PRK00346.1-4"/>
    <property type="match status" value="1"/>
</dbReference>
<dbReference type="NCBIfam" id="TIGR00087">
    <property type="entry name" value="surE"/>
    <property type="match status" value="1"/>
</dbReference>
<dbReference type="PANTHER" id="PTHR30457">
    <property type="entry name" value="5'-NUCLEOTIDASE SURE"/>
    <property type="match status" value="1"/>
</dbReference>
<dbReference type="PANTHER" id="PTHR30457:SF12">
    <property type="entry name" value="5'_3'-NUCLEOTIDASE SURE"/>
    <property type="match status" value="1"/>
</dbReference>
<dbReference type="Pfam" id="PF01975">
    <property type="entry name" value="SurE"/>
    <property type="match status" value="1"/>
</dbReference>
<dbReference type="SUPFAM" id="SSF64167">
    <property type="entry name" value="SurE-like"/>
    <property type="match status" value="1"/>
</dbReference>
<proteinExistence type="inferred from homology"/>
<accession>Q07N44</accession>
<protein>
    <recommendedName>
        <fullName evidence="1">5'-nucleotidase SurE</fullName>
        <ecNumber evidence="1">3.1.3.5</ecNumber>
    </recommendedName>
    <alternativeName>
        <fullName evidence="1">Nucleoside 5'-monophosphate phosphohydrolase</fullName>
    </alternativeName>
</protein>
<organism>
    <name type="scientific">Rhodopseudomonas palustris (strain BisA53)</name>
    <dbReference type="NCBI Taxonomy" id="316055"/>
    <lineage>
        <taxon>Bacteria</taxon>
        <taxon>Pseudomonadati</taxon>
        <taxon>Pseudomonadota</taxon>
        <taxon>Alphaproteobacteria</taxon>
        <taxon>Hyphomicrobiales</taxon>
        <taxon>Nitrobacteraceae</taxon>
        <taxon>Rhodopseudomonas</taxon>
    </lineage>
</organism>
<reference key="1">
    <citation type="submission" date="2006-09" db="EMBL/GenBank/DDBJ databases">
        <title>Complete sequence of Rhodopseudomonas palustris BisA53.</title>
        <authorList>
            <consortium name="US DOE Joint Genome Institute"/>
            <person name="Copeland A."/>
            <person name="Lucas S."/>
            <person name="Lapidus A."/>
            <person name="Barry K."/>
            <person name="Detter J.C."/>
            <person name="Glavina del Rio T."/>
            <person name="Hammon N."/>
            <person name="Israni S."/>
            <person name="Dalin E."/>
            <person name="Tice H."/>
            <person name="Pitluck S."/>
            <person name="Chain P."/>
            <person name="Malfatti S."/>
            <person name="Shin M."/>
            <person name="Vergez L."/>
            <person name="Schmutz J."/>
            <person name="Larimer F."/>
            <person name="Land M."/>
            <person name="Hauser L."/>
            <person name="Pelletier D.A."/>
            <person name="Kyrpides N."/>
            <person name="Kim E."/>
            <person name="Harwood C.S."/>
            <person name="Oda Y."/>
            <person name="Richardson P."/>
        </authorList>
    </citation>
    <scope>NUCLEOTIDE SEQUENCE [LARGE SCALE GENOMIC DNA]</scope>
    <source>
        <strain>BisA53</strain>
    </source>
</reference>
<feature type="chain" id="PRO_1000007781" description="5'-nucleotidase SurE">
    <location>
        <begin position="1"/>
        <end position="255"/>
    </location>
</feature>
<feature type="binding site" evidence="1">
    <location>
        <position position="8"/>
    </location>
    <ligand>
        <name>a divalent metal cation</name>
        <dbReference type="ChEBI" id="CHEBI:60240"/>
    </ligand>
</feature>
<feature type="binding site" evidence="1">
    <location>
        <position position="9"/>
    </location>
    <ligand>
        <name>a divalent metal cation</name>
        <dbReference type="ChEBI" id="CHEBI:60240"/>
    </ligand>
</feature>
<feature type="binding site" evidence="1">
    <location>
        <position position="40"/>
    </location>
    <ligand>
        <name>a divalent metal cation</name>
        <dbReference type="ChEBI" id="CHEBI:60240"/>
    </ligand>
</feature>
<feature type="binding site" evidence="1">
    <location>
        <position position="93"/>
    </location>
    <ligand>
        <name>a divalent metal cation</name>
        <dbReference type="ChEBI" id="CHEBI:60240"/>
    </ligand>
</feature>
<comment type="function">
    <text evidence="1">Nucleotidase that shows phosphatase activity on nucleoside 5'-monophosphates.</text>
</comment>
<comment type="catalytic activity">
    <reaction evidence="1">
        <text>a ribonucleoside 5'-phosphate + H2O = a ribonucleoside + phosphate</text>
        <dbReference type="Rhea" id="RHEA:12484"/>
        <dbReference type="ChEBI" id="CHEBI:15377"/>
        <dbReference type="ChEBI" id="CHEBI:18254"/>
        <dbReference type="ChEBI" id="CHEBI:43474"/>
        <dbReference type="ChEBI" id="CHEBI:58043"/>
        <dbReference type="EC" id="3.1.3.5"/>
    </reaction>
</comment>
<comment type="cofactor">
    <cofactor evidence="1">
        <name>a divalent metal cation</name>
        <dbReference type="ChEBI" id="CHEBI:60240"/>
    </cofactor>
    <text evidence="1">Binds 1 divalent metal cation per subunit.</text>
</comment>
<comment type="subcellular location">
    <subcellularLocation>
        <location evidence="1">Cytoplasm</location>
    </subcellularLocation>
</comment>
<comment type="similarity">
    <text evidence="1">Belongs to the SurE nucleotidase family.</text>
</comment>
<sequence>MRILCTNDDGVHAPGLKIVEEIARALSDDVWVVAPELDQSGVSHSLSLNDPLRLREIGPRHFAVRGTPTDCVIMGARHILGDKGPDLVLSGVNKGRNVAEDVVYSGTIAGALEGTILGIPSFALSQEYSHDSRSAPLWETALAHGPKILRKALDAGVPKNTVINVNFPACAPEEVAGVLVTRQGKRNQGFLRVDERRDGRGNPYFWIGFERVVVVDTPAEGTDLAALAARYISVTPLKLDRTDEGFSEALRSTLA</sequence>
<name>SURE_RHOP5</name>